<dbReference type="EMBL" id="U34842">
    <property type="protein sequence ID" value="AAB02987.1"/>
    <property type="molecule type" value="Genomic_DNA"/>
</dbReference>
<dbReference type="EMBL" id="U44804">
    <property type="protein sequence ID" value="AAC83385.1"/>
    <property type="status" value="ALT_FRAME"/>
    <property type="molecule type" value="Genomic_DNA"/>
</dbReference>
<dbReference type="PIR" id="T18346">
    <property type="entry name" value="T18346"/>
</dbReference>
<dbReference type="SMR" id="Q49379"/>
<dbReference type="STRING" id="1006581.GCW_01045"/>
<dbReference type="GO" id="GO:0005886">
    <property type="term" value="C:plasma membrane"/>
    <property type="evidence" value="ECO:0007669"/>
    <property type="project" value="UniProtKB-SubCell"/>
</dbReference>
<dbReference type="GO" id="GO:0020035">
    <property type="term" value="P:adhesion of symbiont to microvasculature"/>
    <property type="evidence" value="ECO:0007669"/>
    <property type="project" value="UniProtKB-KW"/>
</dbReference>
<dbReference type="InterPro" id="IPR022400">
    <property type="entry name" value="Adhesin_P1"/>
</dbReference>
<dbReference type="InterPro" id="IPR022116">
    <property type="entry name" value="P1_N"/>
</dbReference>
<dbReference type="NCBIfam" id="TIGR03839">
    <property type="entry name" value="termin_org_P1"/>
    <property type="match status" value="1"/>
</dbReference>
<dbReference type="Pfam" id="PF12378">
    <property type="entry name" value="P1_N"/>
    <property type="match status" value="1"/>
</dbReference>
<protein>
    <recommendedName>
        <fullName>Adhesin P1</fullName>
    </recommendedName>
    <alternativeName>
        <fullName>Attachment protein</fullName>
    </alternativeName>
    <alternativeName>
        <fullName>Cytadhesin P1</fullName>
    </alternativeName>
</protein>
<name>ADP1_MYCGL</name>
<feature type="signal peptide" evidence="1">
    <location>
        <begin position="1"/>
        <end position="30"/>
    </location>
</feature>
<feature type="chain" id="PRO_0000020627" description="Adhesin P1">
    <location>
        <begin position="31"/>
        <end position="1122"/>
    </location>
</feature>
<feature type="transmembrane region" description="Helical" evidence="1">
    <location>
        <begin position="997"/>
        <end position="1021"/>
    </location>
</feature>
<feature type="region of interest" description="Disordered" evidence="2">
    <location>
        <begin position="183"/>
        <end position="209"/>
    </location>
</feature>
<feature type="region of interest" description="Disordered" evidence="2">
    <location>
        <begin position="244"/>
        <end position="273"/>
    </location>
</feature>
<feature type="region of interest" description="Disordered" evidence="2">
    <location>
        <begin position="544"/>
        <end position="563"/>
    </location>
</feature>
<feature type="region of interest" description="Disordered" evidence="2">
    <location>
        <begin position="1066"/>
        <end position="1122"/>
    </location>
</feature>
<feature type="compositionally biased region" description="Gly residues" evidence="2">
    <location>
        <begin position="195"/>
        <end position="208"/>
    </location>
</feature>
<feature type="compositionally biased region" description="Polar residues" evidence="2">
    <location>
        <begin position="259"/>
        <end position="273"/>
    </location>
</feature>
<feature type="compositionally biased region" description="Low complexity" evidence="2">
    <location>
        <begin position="1079"/>
        <end position="1122"/>
    </location>
</feature>
<feature type="sequence conflict" description="In Ref. 4; AAC83385." evidence="3" ref="4">
    <original>DM</original>
    <variation>IW</variation>
    <location>
        <begin position="313"/>
        <end position="314"/>
    </location>
</feature>
<feature type="sequence conflict" description="In Ref. 3; no nucleotide entry." evidence="3" ref="3">
    <original>Y</original>
    <variation>F</variation>
    <location>
        <position position="382"/>
    </location>
</feature>
<feature type="sequence conflict" description="In Ref. 3; no nucleotide entry." evidence="3" ref="3">
    <original>I</original>
    <variation>T</variation>
    <location>
        <position position="501"/>
    </location>
</feature>
<feature type="sequence conflict" description="In Ref. 3; no nucleotide entry." evidence="3" ref="3">
    <original>R</original>
    <variation>G</variation>
    <location>
        <position position="568"/>
    </location>
</feature>
<feature type="sequence conflict" description="In Ref. 3; no nucleotide entry." evidence="3" ref="3">
    <original>T</original>
    <variation>A</variation>
    <location>
        <position position="570"/>
    </location>
</feature>
<feature type="sequence conflict" description="In Ref. 4; AAC83385." evidence="3" ref="4">
    <original>DIL</original>
    <variation>VYT</variation>
    <location>
        <begin position="693"/>
        <end position="695"/>
    </location>
</feature>
<organism>
    <name type="scientific">Mycoplasmoides gallisepticum</name>
    <name type="common">Mycoplasma gallisepticum</name>
    <dbReference type="NCBI Taxonomy" id="2096"/>
    <lineage>
        <taxon>Bacteria</taxon>
        <taxon>Bacillati</taxon>
        <taxon>Mycoplasmatota</taxon>
        <taxon>Mycoplasmoidales</taxon>
        <taxon>Mycoplasmoidaceae</taxon>
        <taxon>Mycoplasmoides</taxon>
    </lineage>
</organism>
<keyword id="KW-1003">Cell membrane</keyword>
<keyword id="KW-0200">Cytadherence</keyword>
<keyword id="KW-0472">Membrane</keyword>
<keyword id="KW-0732">Signal</keyword>
<keyword id="KW-0812">Transmembrane</keyword>
<keyword id="KW-1133">Transmembrane helix</keyword>
<accession>Q49379</accession>
<accession>Q49437</accession>
<accession>Q53351</accession>
<gene>
    <name type="primary">gapA</name>
    <name type="synonym">mgc1</name>
</gene>
<sequence>MKKLIFKLSVGITPLALIGLGSFGLAVSGAKPNNLKPVNQVGEMNSQGQSNLLEKARRWRNSNFTSLSIDGTNPGALVLTGSKSISRIDLYGNVIWTFDPGNTNDLTGKVGFYDANNKLTAFSGDVSFNVSDLSSKTVVEATQDQEDPNVFYLLLMPDAAVQQEQKTKDQVFENYFMSDAPAAGDTSAEGSATPAGGGSGSSAAGGGAVAPAAASSTARLVEEGNSAGMGTMTPTASTSETVIDYNSDQNKIPKPKTLLDSSESSESINGGRTYANINTQKNLQGVIVKVNENLFNSENPFAVENMAFIKPKDMVDNYPSTWTQGSANGKMTNVLQFYKHDNPNAVNNRFYRAKYYPKRLETQTTTPLIDSSFSPYEHPEWYEGNQFVMPWMQYITNLGGLYAKDGMVYLFGGNGTWVNNESALSIGVFRTKFENRTAEAPGNTKTVGYPYGILLSAISFDATRNGLALAAPALGQDVGYHFVPRLAVGGVSSPRGANGNIFLGSAITWGTNGGNFLDTKWHSPAVIEDAPTTFITVNSSGVLQNSGSQQSTSTPMPNSNGNESIPYRWTNSYDYNSVRFAALISKPAGGNTKQVESLFTTALKLDTLNSLPNKFTQENNIFFSYAMLDGRQWSLGTRKDSTWLTTNTINNFTYNTQQQLASTAAGENANPRNILNALTTAKGFDRRDIGNVDILYSNNTNKFTYYYQVGGAITTWPEVQVNYKTSANITYYNLTRTDFGSTTPATQDANTVSSKLNGAYLSSTGDQQGWYNGSIYVKKASFTPSSQGYTWQDFKGLTTTASNAVISNWTKAGYSIRPDDDTVFSVSKIPFEKEITAAVNVRSLDSYYVQLNGETSVNTVARVSPDSSALTLNPKRITNPLMNRDNVIGQGAFISRNDIPSSFFENKINDIVTTEADGTEVLDSKYINSIYRYTPPQNNPHIRLRLLVIDRSRATNDFIKLLPQVLVDGEYVAVPQANSVFVSDQEFTGFDALPGYVLPVAISIPIIIIALALALGLGIGIPMSQNRKMLKQGFAISNKKVDILTTAVGSVFKQIINRTSVTNIKKTPQMLQANKKDGASSPSKPSAPAAKKPTGPTKPSAPGAKPTAPAKPKAPAPTKKIE</sequence>
<evidence type="ECO:0000255" key="1"/>
<evidence type="ECO:0000256" key="2">
    <source>
        <dbReference type="SAM" id="MobiDB-lite"/>
    </source>
</evidence>
<evidence type="ECO:0000305" key="3"/>
<comment type="function">
    <text>Could be involved in cytadherence.</text>
</comment>
<comment type="subcellular location">
    <subcellularLocation>
        <location evidence="3">Cell membrane</location>
        <topology evidence="3">Single-pass type I membrane protein</topology>
    </subcellularLocation>
</comment>
<comment type="similarity">
    <text evidence="3">Belongs to the adhesin P1 family.</text>
</comment>
<comment type="sequence caution" evidence="3">
    <conflict type="frameshift">
        <sequence resource="EMBL-CDS" id="AAC83385"/>
    </conflict>
</comment>
<reference key="1">
    <citation type="journal article" date="1996" name="Infect. Immun.">
        <title>Cloning and characterization of a putative cytadhesin gene (mgc1) from Mycoplasma gallisepticum.</title>
        <authorList>
            <person name="Keeler C.L. Jr."/>
            <person name="Hnatow L.L."/>
            <person name="Whetzel P.L."/>
            <person name="Dohms J.E."/>
        </authorList>
    </citation>
    <scope>NUCLEOTIDE SEQUENCE [GENOMIC DNA]</scope>
    <source>
        <strain>S6</strain>
    </source>
</reference>
<reference key="2">
    <citation type="submission" date="1995-10" db="EMBL/GenBank/DDBJ databases">
        <authorList>
            <person name="Hnatow L.L."/>
            <person name="Keeler C.L. Jr."/>
            <person name="Tessmer L."/>
            <person name="Dohms J.E."/>
        </authorList>
    </citation>
    <scope>NUCLEOTIDE SEQUENCE [GENOMIC DNA] OF 1-12</scope>
    <source>
        <strain>S6</strain>
    </source>
</reference>
<reference key="3">
    <citation type="journal article" date="1993" name="Avian Dis.">
        <title>Identification of the putative cytadhesin gene of Mycoplasma gallisepticum and its use as a DNA probe.</title>
        <authorList>
            <person name="Dohms J.E."/>
            <person name="Hnatow L.L."/>
            <person name="Whetzel P."/>
            <person name="Morgan R."/>
            <person name="Keeler C.L. Jr."/>
        </authorList>
    </citation>
    <scope>NUCLEOTIDE SEQUENCE [GENOMIC DNA] OF 378-570</scope>
    <source>
        <strain>S6</strain>
    </source>
</reference>
<reference key="4">
    <citation type="submission" date="1996-02" db="EMBL/GenBank/DDBJ databases">
        <authorList>
            <person name="Goh M.S."/>
            <person name="Geary S.J."/>
        </authorList>
    </citation>
    <scope>NUCLEOTIDE SEQUENCE [GENOMIC DNA] OF 159-1122</scope>
    <source>
        <strain>S6</strain>
    </source>
</reference>
<proteinExistence type="inferred from homology"/>